<proteinExistence type="inferred from homology"/>
<organism>
    <name type="scientific">Vibrio sp. (strain JT0107)</name>
    <dbReference type="NCBI Taxonomy" id="47913"/>
    <lineage>
        <taxon>Bacteria</taxon>
        <taxon>Pseudomonadati</taxon>
        <taxon>Pseudomonadota</taxon>
        <taxon>Gammaproteobacteria</taxon>
        <taxon>Vibrionales</taxon>
        <taxon>Vibrionaceae</taxon>
        <taxon>Vibrio</taxon>
    </lineage>
</organism>
<gene>
    <name type="primary">agaA</name>
</gene>
<dbReference type="EC" id="3.2.1.81"/>
<dbReference type="EMBL" id="D14721">
    <property type="protein sequence ID" value="BAA03541.1"/>
    <property type="molecule type" value="Genomic_DNA"/>
</dbReference>
<dbReference type="SMR" id="P48839"/>
<dbReference type="CAZy" id="GH50">
    <property type="family name" value="Glycoside Hydrolase Family 50"/>
</dbReference>
<dbReference type="BioCyc" id="MetaCyc:MONOMER-16649"/>
<dbReference type="GO" id="GO:0033916">
    <property type="term" value="F:beta-agarase activity"/>
    <property type="evidence" value="ECO:0007669"/>
    <property type="project" value="UniProtKB-EC"/>
</dbReference>
<dbReference type="Gene3D" id="2.60.120.430">
    <property type="entry name" value="Galactose-binding lectin"/>
    <property type="match status" value="2"/>
</dbReference>
<dbReference type="Gene3D" id="3.20.20.80">
    <property type="entry name" value="Glycosidases"/>
    <property type="match status" value="1"/>
</dbReference>
<dbReference type="InterPro" id="IPR040669">
    <property type="entry name" value="Agarase_CBM"/>
</dbReference>
<dbReference type="InterPro" id="IPR017853">
    <property type="entry name" value="Glycoside_hydrolase_SF"/>
</dbReference>
<dbReference type="Pfam" id="PF17992">
    <property type="entry name" value="Agarase_CBM"/>
    <property type="match status" value="1"/>
</dbReference>
<dbReference type="SUPFAM" id="SSF51445">
    <property type="entry name" value="(Trans)glycosidases"/>
    <property type="match status" value="1"/>
</dbReference>
<feature type="signal peptide" evidence="1">
    <location>
        <begin position="1"/>
        <end position="20"/>
    </location>
</feature>
<feature type="chain" id="PRO_0000012215" description="Beta-agarase A">
    <location>
        <begin position="21"/>
        <end position="995"/>
    </location>
</feature>
<feature type="region of interest" description="Disordered" evidence="2">
    <location>
        <begin position="936"/>
        <end position="972"/>
    </location>
</feature>
<feature type="compositionally biased region" description="Pro residues" evidence="2">
    <location>
        <begin position="948"/>
        <end position="965"/>
    </location>
</feature>
<sequence>MKIKFLSAAIAASLALPLSAATLVTSFEEADYSSSENNAEFLEVSGDATSEVSTEQATDGNQSIKASFDAAFKPMVVWNWASWNWGAEDVMSVDVVNPNDTDVTFAIKLIDSDILPDWVDESQTSLDYFTVSANTTQTFSFNLNGGNEFQTHGENFSKDKVIGVQFMLSENDPQVLYFDNIMVDGETVTPPPSDGAVNTQTAPVATLAQIEDFETIPDYLRPDGGVNVSTTTEIVTKGAAAMAAEFTAGWNGLVFAGTWNWAELGEHTAVAVDVSNNSDSNIWLYSRIEDVNSQGETATRGVLVKAGESKTIYTSLNDNPSLLTQDERVSALGLRDIPADPMSAQNGWGDFVALDKSQITAIRYFIGELASGETSQTLVFDNMRVIKDLNHESAYAEMTDAMGQNNLVTYAGKVASKEELAKLSDPEMAALGELTNRNMYGGNPDSSPATDCVLATPASFNACKDADGNWQLVDPAGNAFFSTGVDNIRLQDTYTMTGVSSDAESESALRQSMFTEIPSDYVNENYGPVHSGPVSQGQAVSFYANNLITRHASEDVWRDITVKRMKDWGFNTLGNWTDPALYANGDVPYVANGWSTSGADRLPVKQIGSGYWGPLPDPWDANFATNAATMAAEIKAQVEGNEEYLVGIFVDNEMSWGNVTDVEGSRYAQTLAVFNTDGTDATTSPAKNSFIWFLENQRYTGGIADLNAAWGTDYASWDATSPAQELAYVAGMEADMQFLAWQFAFQYFNTVNTALKAELPNHLYLGSRFADWGRTPDVVSAAAAVVDVMSYNIYKDSIAAADWDADALSQIEAIDKPVIIGEFHFGALDSGSFAEGVVNATSQQDRADKMVSFYESVNAHKNFVGAHWFQYIDSPLTGRAWDGENYNVGFVSNTDTPYTLMTDAAREFNCGMYGTDCSSLSNATEAASRAGELYTGTNIGVSHSGPEAPDPGEPVDPPIDPPTPPTGGVTGGGGSAGWLSLLGLAGVFLLRRRKV</sequence>
<reference key="1">
    <citation type="journal article" date="1993" name="Appl. Environ. Microbiol.">
        <title>Cloning and sequencing of agaA, a unique agarase 0107 gene from a marine bacterium, Vibrio sp. strain JT0107.</title>
        <authorList>
            <person name="Sugano Y."/>
            <person name="Matsumoto T."/>
            <person name="Kodama H."/>
            <person name="Noma M."/>
        </authorList>
    </citation>
    <scope>NUCLEOTIDE SEQUENCE [GENOMIC DNA]</scope>
</reference>
<keyword id="KW-0326">Glycosidase</keyword>
<keyword id="KW-0378">Hydrolase</keyword>
<keyword id="KW-0732">Signal</keyword>
<comment type="function">
    <text>Hydrolyzes agarose and also neoagarotetraose to yield neoagarobiose.</text>
</comment>
<comment type="catalytic activity">
    <reaction>
        <text>Hydrolysis of (1-&gt;4)-beta-D-galactosidic linkages in agarose, giving the tetramer as the predominant product.</text>
        <dbReference type="EC" id="3.2.1.81"/>
    </reaction>
</comment>
<comment type="similarity">
    <text evidence="3">Belongs to the glycosyl hydrolase 50 family.</text>
</comment>
<evidence type="ECO:0000255" key="1"/>
<evidence type="ECO:0000256" key="2">
    <source>
        <dbReference type="SAM" id="MobiDB-lite"/>
    </source>
</evidence>
<evidence type="ECO:0000305" key="3"/>
<name>AGAA_VIBS7</name>
<protein>
    <recommendedName>
        <fullName>Beta-agarase A</fullName>
        <ecNumber>3.2.1.81</ecNumber>
    </recommendedName>
    <alternativeName>
        <fullName>Agarase 0107</fullName>
    </alternativeName>
</protein>
<accession>P48839</accession>